<reference key="1">
    <citation type="journal article" date="2007" name="Mol. Phylogenet. Evol.">
        <title>Phylogenetic and evolutionary implications of complete chloroplast genome sequences of four early-diverging angiosperms: Buxus (Buxaceae), Chloranthus (Chloranthaceae), Dioscorea (Dioscoreaceae), and Illicium (Schisandraceae).</title>
        <authorList>
            <person name="Hansen D.R."/>
            <person name="Dastidar S.G."/>
            <person name="Cai Z."/>
            <person name="Penaflor C."/>
            <person name="Kuehl J.V."/>
            <person name="Boore J.L."/>
            <person name="Jansen R.K."/>
        </authorList>
    </citation>
    <scope>NUCLEOTIDE SEQUENCE [LARGE SCALE GENOMIC DNA]</scope>
</reference>
<keyword id="KW-0150">Chloroplast</keyword>
<keyword id="KW-0472">Membrane</keyword>
<keyword id="KW-0520">NAD</keyword>
<keyword id="KW-0521">NADP</keyword>
<keyword id="KW-0934">Plastid</keyword>
<keyword id="KW-0618">Plastoquinone</keyword>
<keyword id="KW-0874">Quinone</keyword>
<keyword id="KW-0793">Thylakoid</keyword>
<keyword id="KW-1278">Translocase</keyword>
<keyword id="KW-0813">Transport</keyword>
<name>NDHH_CHLSC</name>
<sequence length="395" mass="45607">MTVPATSTRKDLMIVNMGPHHPSMHGVLRLIVTLDGEDVIDCEPILGYLHRGMEKIAENRTIIQYLPYVTRWDYLATMFTEAITVNAPEQLGNIQVPKRASYIRVIMLELSRIASHLLWLGPFMADIGAQTPFFYIFRERELLYDLFEAATGMRMMHNYFRIGGVAADLPHGWVDKCLDFCDYFLTGVAEYQKLITRNPIFLERVEGVGIIGGEEAINWGLSGPMLRASGIRWDLRKVDHYECYDEFDWEVQWQKEGDSLARYLVRISEMTESIKIIQQALEGIPGGPYENLEVRRFDRARDAEWNDFDYRFISKKPSPTFELSKQELYARVEAPKGELGIFLIGDNSVFPWRWKIRPPGFINLQILPQLVKRMKLADIMTILGSIDIIMGEVDR</sequence>
<accession>A6MMH1</accession>
<gene>
    <name evidence="1" type="primary">ndhH</name>
</gene>
<organism>
    <name type="scientific">Chloranthus spicatus</name>
    <name type="common">Chulantree</name>
    <name type="synonym">Nigrina spicata</name>
    <dbReference type="NCBI Taxonomy" id="13006"/>
    <lineage>
        <taxon>Eukaryota</taxon>
        <taxon>Viridiplantae</taxon>
        <taxon>Streptophyta</taxon>
        <taxon>Embryophyta</taxon>
        <taxon>Tracheophyta</taxon>
        <taxon>Spermatophyta</taxon>
        <taxon>Magnoliopsida</taxon>
        <taxon>Chloranthales</taxon>
        <taxon>Chloranthaceae</taxon>
        <taxon>Chloranthus</taxon>
    </lineage>
</organism>
<evidence type="ECO:0000255" key="1">
    <source>
        <dbReference type="HAMAP-Rule" id="MF_01358"/>
    </source>
</evidence>
<protein>
    <recommendedName>
        <fullName evidence="1">NAD(P)H-quinone oxidoreductase subunit H, chloroplastic</fullName>
        <ecNumber evidence="1">7.1.1.-</ecNumber>
    </recommendedName>
    <alternativeName>
        <fullName>NAD(P)H dehydrogenase subunit H</fullName>
    </alternativeName>
    <alternativeName>
        <fullName evidence="1">NADH-plastoquinone oxidoreductase 49 kDa subunit</fullName>
    </alternativeName>
    <alternativeName>
        <fullName evidence="1">NADH-plastoquinone oxidoreductase subunit H</fullName>
    </alternativeName>
</protein>
<geneLocation type="chloroplast"/>
<feature type="chain" id="PRO_0000357975" description="NAD(P)H-quinone oxidoreductase subunit H, chloroplastic">
    <location>
        <begin position="1"/>
        <end position="395"/>
    </location>
</feature>
<dbReference type="EC" id="7.1.1.-" evidence="1"/>
<dbReference type="EMBL" id="EF380352">
    <property type="protein sequence ID" value="ABQ43308.1"/>
    <property type="molecule type" value="Genomic_DNA"/>
</dbReference>
<dbReference type="RefSeq" id="YP_001294147.1">
    <property type="nucleotide sequence ID" value="NC_009598.1"/>
</dbReference>
<dbReference type="SMR" id="A6MMH1"/>
<dbReference type="GeneID" id="5236544"/>
<dbReference type="GO" id="GO:0009535">
    <property type="term" value="C:chloroplast thylakoid membrane"/>
    <property type="evidence" value="ECO:0007669"/>
    <property type="project" value="UniProtKB-SubCell"/>
</dbReference>
<dbReference type="GO" id="GO:0051287">
    <property type="term" value="F:NAD binding"/>
    <property type="evidence" value="ECO:0007669"/>
    <property type="project" value="InterPro"/>
</dbReference>
<dbReference type="GO" id="GO:0016655">
    <property type="term" value="F:oxidoreductase activity, acting on NAD(P)H, quinone or similar compound as acceptor"/>
    <property type="evidence" value="ECO:0007669"/>
    <property type="project" value="UniProtKB-UniRule"/>
</dbReference>
<dbReference type="GO" id="GO:0048038">
    <property type="term" value="F:quinone binding"/>
    <property type="evidence" value="ECO:0007669"/>
    <property type="project" value="UniProtKB-KW"/>
</dbReference>
<dbReference type="GO" id="GO:0019684">
    <property type="term" value="P:photosynthesis, light reaction"/>
    <property type="evidence" value="ECO:0007669"/>
    <property type="project" value="UniProtKB-UniRule"/>
</dbReference>
<dbReference type="FunFam" id="1.10.645.10:FF:000003">
    <property type="entry name" value="NAD(P)H-quinone oxidoreductase subunit H, chloroplastic"/>
    <property type="match status" value="1"/>
</dbReference>
<dbReference type="Gene3D" id="1.10.645.10">
    <property type="entry name" value="Cytochrome-c3 Hydrogenase, chain B"/>
    <property type="match status" value="1"/>
</dbReference>
<dbReference type="HAMAP" id="MF_01358">
    <property type="entry name" value="NDH1_NuoD"/>
    <property type="match status" value="1"/>
</dbReference>
<dbReference type="InterPro" id="IPR001135">
    <property type="entry name" value="NADH_Q_OxRdtase_suD"/>
</dbReference>
<dbReference type="InterPro" id="IPR014029">
    <property type="entry name" value="NADH_UbQ_OxRdtase_49kDa_CS"/>
</dbReference>
<dbReference type="InterPro" id="IPR022885">
    <property type="entry name" value="NDH1_su_D/H"/>
</dbReference>
<dbReference type="InterPro" id="IPR029014">
    <property type="entry name" value="NiFe-Hase_large"/>
</dbReference>
<dbReference type="NCBIfam" id="NF004739">
    <property type="entry name" value="PRK06075.1"/>
    <property type="match status" value="1"/>
</dbReference>
<dbReference type="NCBIfam" id="NF005649">
    <property type="entry name" value="PRK07415.1"/>
    <property type="match status" value="1"/>
</dbReference>
<dbReference type="PANTHER" id="PTHR11993:SF10">
    <property type="entry name" value="NADH DEHYDROGENASE [UBIQUINONE] IRON-SULFUR PROTEIN 2, MITOCHONDRIAL"/>
    <property type="match status" value="1"/>
</dbReference>
<dbReference type="PANTHER" id="PTHR11993">
    <property type="entry name" value="NADH-UBIQUINONE OXIDOREDUCTASE 49 KDA SUBUNIT"/>
    <property type="match status" value="1"/>
</dbReference>
<dbReference type="Pfam" id="PF00346">
    <property type="entry name" value="Complex1_49kDa"/>
    <property type="match status" value="1"/>
</dbReference>
<dbReference type="SUPFAM" id="SSF56762">
    <property type="entry name" value="HydB/Nqo4-like"/>
    <property type="match status" value="1"/>
</dbReference>
<dbReference type="PROSITE" id="PS00535">
    <property type="entry name" value="COMPLEX1_49K"/>
    <property type="match status" value="1"/>
</dbReference>
<proteinExistence type="inferred from homology"/>
<comment type="function">
    <text evidence="1">NDH shuttles electrons from NAD(P)H:plastoquinone, via FMN and iron-sulfur (Fe-S) centers, to quinones in the photosynthetic chain and possibly in a chloroplast respiratory chain. The immediate electron acceptor for the enzyme in this species is believed to be plastoquinone. Couples the redox reaction to proton translocation, and thus conserves the redox energy in a proton gradient.</text>
</comment>
<comment type="catalytic activity">
    <reaction evidence="1">
        <text>a plastoquinone + NADH + (n+1) H(+)(in) = a plastoquinol + NAD(+) + n H(+)(out)</text>
        <dbReference type="Rhea" id="RHEA:42608"/>
        <dbReference type="Rhea" id="RHEA-COMP:9561"/>
        <dbReference type="Rhea" id="RHEA-COMP:9562"/>
        <dbReference type="ChEBI" id="CHEBI:15378"/>
        <dbReference type="ChEBI" id="CHEBI:17757"/>
        <dbReference type="ChEBI" id="CHEBI:57540"/>
        <dbReference type="ChEBI" id="CHEBI:57945"/>
        <dbReference type="ChEBI" id="CHEBI:62192"/>
    </reaction>
</comment>
<comment type="catalytic activity">
    <reaction evidence="1">
        <text>a plastoquinone + NADPH + (n+1) H(+)(in) = a plastoquinol + NADP(+) + n H(+)(out)</text>
        <dbReference type="Rhea" id="RHEA:42612"/>
        <dbReference type="Rhea" id="RHEA-COMP:9561"/>
        <dbReference type="Rhea" id="RHEA-COMP:9562"/>
        <dbReference type="ChEBI" id="CHEBI:15378"/>
        <dbReference type="ChEBI" id="CHEBI:17757"/>
        <dbReference type="ChEBI" id="CHEBI:57783"/>
        <dbReference type="ChEBI" id="CHEBI:58349"/>
        <dbReference type="ChEBI" id="CHEBI:62192"/>
    </reaction>
</comment>
<comment type="subunit">
    <text evidence="1">NDH is composed of at least 16 different subunits, 5 of which are encoded in the nucleus.</text>
</comment>
<comment type="subcellular location">
    <subcellularLocation>
        <location evidence="1">Plastid</location>
        <location evidence="1">Chloroplast thylakoid membrane</location>
        <topology evidence="1">Peripheral membrane protein</topology>
        <orientation evidence="1">Stromal side</orientation>
    </subcellularLocation>
</comment>
<comment type="similarity">
    <text evidence="1">Belongs to the complex I 49 kDa subunit family.</text>
</comment>